<sequence length="213" mass="22920">MEFLLDSANPEEIRQAWAMGVIGGITTNPSLVAKEGRDFHQLLQELVQIVNGPISAEVIALDTEGMLGEARELAAMHPNIVVKIPMTEEGLKAVKVLKAEGIKTNVTLVFSAVQALLAARAGATYVSPFLGRLDDIGENGLLLLADICEVFGVHGLETKVIAASIRNPVHVTEAAKIGADYATVPFNVLCQLFKHPLTEAGIKKFLADWQKLK</sequence>
<comment type="function">
    <text evidence="1">Transaldolase is important for the balance of metabolites in the pentose-phosphate pathway.</text>
</comment>
<comment type="catalytic activity">
    <reaction evidence="1">
        <text>D-sedoheptulose 7-phosphate + D-glyceraldehyde 3-phosphate = D-erythrose 4-phosphate + beta-D-fructose 6-phosphate</text>
        <dbReference type="Rhea" id="RHEA:17053"/>
        <dbReference type="ChEBI" id="CHEBI:16897"/>
        <dbReference type="ChEBI" id="CHEBI:57483"/>
        <dbReference type="ChEBI" id="CHEBI:57634"/>
        <dbReference type="ChEBI" id="CHEBI:59776"/>
        <dbReference type="EC" id="2.2.1.2"/>
    </reaction>
</comment>
<comment type="pathway">
    <text evidence="1">Carbohydrate degradation; pentose phosphate pathway; D-glyceraldehyde 3-phosphate and beta-D-fructose 6-phosphate from D-ribose 5-phosphate and D-xylulose 5-phosphate (non-oxidative stage): step 2/3.</text>
</comment>
<comment type="subcellular location">
    <subcellularLocation>
        <location evidence="1">Cytoplasm</location>
    </subcellularLocation>
</comment>
<comment type="similarity">
    <text evidence="1">Belongs to the transaldolase family. Type 3B subfamily.</text>
</comment>
<dbReference type="EC" id="2.2.1.2" evidence="1"/>
<dbReference type="EMBL" id="AP008230">
    <property type="protein sequence ID" value="BAE86727.1"/>
    <property type="molecule type" value="Genomic_DNA"/>
</dbReference>
<dbReference type="SMR" id="Q24ML5"/>
<dbReference type="STRING" id="138119.DSY4938"/>
<dbReference type="KEGG" id="dsy:DSY4938"/>
<dbReference type="eggNOG" id="COG0176">
    <property type="taxonomic scope" value="Bacteria"/>
</dbReference>
<dbReference type="HOGENOM" id="CLU_079764_0_0_9"/>
<dbReference type="UniPathway" id="UPA00115">
    <property type="reaction ID" value="UER00414"/>
</dbReference>
<dbReference type="Proteomes" id="UP000001946">
    <property type="component" value="Chromosome"/>
</dbReference>
<dbReference type="GO" id="GO:0005737">
    <property type="term" value="C:cytoplasm"/>
    <property type="evidence" value="ECO:0007669"/>
    <property type="project" value="UniProtKB-SubCell"/>
</dbReference>
<dbReference type="GO" id="GO:0016832">
    <property type="term" value="F:aldehyde-lyase activity"/>
    <property type="evidence" value="ECO:0007669"/>
    <property type="project" value="InterPro"/>
</dbReference>
<dbReference type="GO" id="GO:0004801">
    <property type="term" value="F:transaldolase activity"/>
    <property type="evidence" value="ECO:0007669"/>
    <property type="project" value="UniProtKB-UniRule"/>
</dbReference>
<dbReference type="GO" id="GO:0005975">
    <property type="term" value="P:carbohydrate metabolic process"/>
    <property type="evidence" value="ECO:0007669"/>
    <property type="project" value="InterPro"/>
</dbReference>
<dbReference type="GO" id="GO:0006098">
    <property type="term" value="P:pentose-phosphate shunt"/>
    <property type="evidence" value="ECO:0007669"/>
    <property type="project" value="UniProtKB-UniRule"/>
</dbReference>
<dbReference type="CDD" id="cd00956">
    <property type="entry name" value="Transaldolase_FSA"/>
    <property type="match status" value="1"/>
</dbReference>
<dbReference type="FunFam" id="3.20.20.70:FF:000018">
    <property type="entry name" value="Probable transaldolase"/>
    <property type="match status" value="1"/>
</dbReference>
<dbReference type="Gene3D" id="3.20.20.70">
    <property type="entry name" value="Aldolase class I"/>
    <property type="match status" value="1"/>
</dbReference>
<dbReference type="HAMAP" id="MF_00494">
    <property type="entry name" value="Transaldolase_3b"/>
    <property type="match status" value="1"/>
</dbReference>
<dbReference type="InterPro" id="IPR013785">
    <property type="entry name" value="Aldolase_TIM"/>
</dbReference>
<dbReference type="InterPro" id="IPR001585">
    <property type="entry name" value="TAL/FSA"/>
</dbReference>
<dbReference type="InterPro" id="IPR022999">
    <property type="entry name" value="Transaldolase_3B"/>
</dbReference>
<dbReference type="InterPro" id="IPR004731">
    <property type="entry name" value="Transaldolase_3B/F6P_aldolase"/>
</dbReference>
<dbReference type="InterPro" id="IPR018225">
    <property type="entry name" value="Transaldolase_AS"/>
</dbReference>
<dbReference type="InterPro" id="IPR033919">
    <property type="entry name" value="TSA/FSA_arc/bac"/>
</dbReference>
<dbReference type="NCBIfam" id="TIGR00875">
    <property type="entry name" value="fsa_talC_mipB"/>
    <property type="match status" value="1"/>
</dbReference>
<dbReference type="PANTHER" id="PTHR10683">
    <property type="entry name" value="TRANSALDOLASE"/>
    <property type="match status" value="1"/>
</dbReference>
<dbReference type="PANTHER" id="PTHR10683:SF36">
    <property type="entry name" value="TRANSALDOLASE"/>
    <property type="match status" value="1"/>
</dbReference>
<dbReference type="Pfam" id="PF00923">
    <property type="entry name" value="TAL_FSA"/>
    <property type="match status" value="1"/>
</dbReference>
<dbReference type="SUPFAM" id="SSF51569">
    <property type="entry name" value="Aldolase"/>
    <property type="match status" value="1"/>
</dbReference>
<dbReference type="PROSITE" id="PS01054">
    <property type="entry name" value="TRANSALDOLASE_1"/>
    <property type="match status" value="1"/>
</dbReference>
<dbReference type="PROSITE" id="PS00958">
    <property type="entry name" value="TRANSALDOLASE_2"/>
    <property type="match status" value="1"/>
</dbReference>
<evidence type="ECO:0000255" key="1">
    <source>
        <dbReference type="HAMAP-Rule" id="MF_00494"/>
    </source>
</evidence>
<protein>
    <recommendedName>
        <fullName evidence="1">Probable transaldolase</fullName>
        <ecNumber evidence="1">2.2.1.2</ecNumber>
    </recommendedName>
</protein>
<reference key="1">
    <citation type="journal article" date="2006" name="J. Bacteriol.">
        <title>Complete genome sequence of the dehalorespiring bacterium Desulfitobacterium hafniense Y51 and comparison with Dehalococcoides ethenogenes 195.</title>
        <authorList>
            <person name="Nonaka H."/>
            <person name="Keresztes G."/>
            <person name="Shinoda Y."/>
            <person name="Ikenaga Y."/>
            <person name="Abe M."/>
            <person name="Naito K."/>
            <person name="Inatomi K."/>
            <person name="Furukawa K."/>
            <person name="Inui M."/>
            <person name="Yukawa H."/>
        </authorList>
    </citation>
    <scope>NUCLEOTIDE SEQUENCE [LARGE SCALE GENOMIC DNA]</scope>
    <source>
        <strain>Y51</strain>
    </source>
</reference>
<accession>Q24ML5</accession>
<gene>
    <name evidence="1" type="primary">tal</name>
    <name type="ordered locus">DSY4938</name>
</gene>
<keyword id="KW-0963">Cytoplasm</keyword>
<keyword id="KW-0570">Pentose shunt</keyword>
<keyword id="KW-1185">Reference proteome</keyword>
<keyword id="KW-0704">Schiff base</keyword>
<keyword id="KW-0808">Transferase</keyword>
<feature type="chain" id="PRO_1000126308" description="Probable transaldolase">
    <location>
        <begin position="1"/>
        <end position="213"/>
    </location>
</feature>
<feature type="active site" description="Schiff-base intermediate with substrate" evidence="1">
    <location>
        <position position="83"/>
    </location>
</feature>
<proteinExistence type="inferred from homology"/>
<organism>
    <name type="scientific">Desulfitobacterium hafniense (strain Y51)</name>
    <dbReference type="NCBI Taxonomy" id="138119"/>
    <lineage>
        <taxon>Bacteria</taxon>
        <taxon>Bacillati</taxon>
        <taxon>Bacillota</taxon>
        <taxon>Clostridia</taxon>
        <taxon>Eubacteriales</taxon>
        <taxon>Desulfitobacteriaceae</taxon>
        <taxon>Desulfitobacterium</taxon>
    </lineage>
</organism>
<name>TAL_DESHY</name>